<keyword id="KW-0012">Acyltransferase</keyword>
<keyword id="KW-1185">Reference proteome</keyword>
<keyword id="KW-0677">Repeat</keyword>
<keyword id="KW-0808">Transferase</keyword>
<organism>
    <name type="scientific">Nocardia farcinica (strain IFM 10152)</name>
    <dbReference type="NCBI Taxonomy" id="247156"/>
    <lineage>
        <taxon>Bacteria</taxon>
        <taxon>Bacillati</taxon>
        <taxon>Actinomycetota</taxon>
        <taxon>Actinomycetes</taxon>
        <taxon>Mycobacteriales</taxon>
        <taxon>Nocardiaceae</taxon>
        <taxon>Nocardia</taxon>
    </lineage>
</organism>
<evidence type="ECO:0000255" key="1">
    <source>
        <dbReference type="HAMAP-Rule" id="MF_01698"/>
    </source>
</evidence>
<gene>
    <name evidence="1" type="primary">mshD</name>
    <name type="ordered locus">NFA_5990</name>
</gene>
<comment type="function">
    <text evidence="1">Catalyzes the transfer of acetyl from acetyl-CoA to desacetylmycothiol (Cys-GlcN-Ins) to form mycothiol.</text>
</comment>
<comment type="catalytic activity">
    <reaction evidence="1">
        <text>1D-myo-inositol 2-(L-cysteinylamino)-2-deoxy-alpha-D-glucopyranoside + acetyl-CoA = mycothiol + CoA + H(+)</text>
        <dbReference type="Rhea" id="RHEA:26172"/>
        <dbReference type="ChEBI" id="CHEBI:15378"/>
        <dbReference type="ChEBI" id="CHEBI:16768"/>
        <dbReference type="ChEBI" id="CHEBI:57287"/>
        <dbReference type="ChEBI" id="CHEBI:57288"/>
        <dbReference type="ChEBI" id="CHEBI:58887"/>
        <dbReference type="EC" id="2.3.1.189"/>
    </reaction>
</comment>
<comment type="subunit">
    <text evidence="1">Monomer.</text>
</comment>
<comment type="similarity">
    <text evidence="1">Belongs to the acetyltransferase family. MshD subfamily.</text>
</comment>
<protein>
    <recommendedName>
        <fullName evidence="1">Mycothiol acetyltransferase</fullName>
        <shortName evidence="1">MSH acetyltransferase</shortName>
        <ecNumber evidence="1">2.3.1.189</ecNumber>
    </recommendedName>
    <alternativeName>
        <fullName evidence="1">Mycothiol synthase</fullName>
    </alternativeName>
</protein>
<sequence length="303" mass="31936">MGDITVRWTQRLDGETADAVRELLAAASAADGVAPVSEQAVLSLGEPGAARHLLAEHDGELAGYANLVPAHGDHPAMAEAAVAPARRGRGIGTALVREALAAGGADARVWAHGDRPAAKAVAARLGLRTARELWQMRRSLATPQLPELVVPDGIVLRTYAGPADDAELLRVNNAAFDWHPEQGGWTQRDIAVRRAESWFDPAGLFLATDTAAPDRVLGFHWTKVHADEQPPVGEVYVVGIDPAAQGRGLGRLLTLAGLHHLRERGLGGVLLYTEADNTAAVNTYTKLGFAPAHVDVAYAANGA</sequence>
<reference key="1">
    <citation type="journal article" date="2004" name="Proc. Natl. Acad. Sci. U.S.A.">
        <title>The complete genomic sequence of Nocardia farcinica IFM 10152.</title>
        <authorList>
            <person name="Ishikawa J."/>
            <person name="Yamashita A."/>
            <person name="Mikami Y."/>
            <person name="Hoshino Y."/>
            <person name="Kurita H."/>
            <person name="Hotta K."/>
            <person name="Shiba T."/>
            <person name="Hattori M."/>
        </authorList>
    </citation>
    <scope>NUCLEOTIDE SEQUENCE [LARGE SCALE GENOMIC DNA]</scope>
    <source>
        <strain>IFM 10152</strain>
    </source>
</reference>
<name>MSHD_NOCFA</name>
<feature type="chain" id="PRO_0000400285" description="Mycothiol acetyltransferase">
    <location>
        <begin position="1"/>
        <end position="303"/>
    </location>
</feature>
<feature type="domain" description="N-acetyltransferase 1" evidence="1">
    <location>
        <begin position="4"/>
        <end position="141"/>
    </location>
</feature>
<feature type="domain" description="N-acetyltransferase 2" evidence="1">
    <location>
        <begin position="154"/>
        <end position="303"/>
    </location>
</feature>
<feature type="binding site" evidence="1">
    <location>
        <position position="38"/>
    </location>
    <ligand>
        <name>1D-myo-inositol 2-(L-cysteinylamino)-2-deoxy-alpha-D-glucopyranoside</name>
        <dbReference type="ChEBI" id="CHEBI:58887"/>
    </ligand>
</feature>
<feature type="binding site" evidence="1">
    <location>
        <begin position="80"/>
        <end position="82"/>
    </location>
    <ligand>
        <name>acetyl-CoA</name>
        <dbReference type="ChEBI" id="CHEBI:57288"/>
        <label>1</label>
    </ligand>
</feature>
<feature type="binding site" evidence="1">
    <location>
        <position position="181"/>
    </location>
    <ligand>
        <name>1D-myo-inositol 2-(L-cysteinylamino)-2-deoxy-alpha-D-glucopyranoside</name>
        <dbReference type="ChEBI" id="CHEBI:58887"/>
    </ligand>
</feature>
<feature type="binding site" evidence="1">
    <location>
        <position position="223"/>
    </location>
    <ligand>
        <name>1D-myo-inositol 2-(L-cysteinylamino)-2-deoxy-alpha-D-glucopyranoside</name>
        <dbReference type="ChEBI" id="CHEBI:58887"/>
    </ligand>
</feature>
<feature type="binding site" evidence="1">
    <location>
        <position position="234"/>
    </location>
    <ligand>
        <name>1D-myo-inositol 2-(L-cysteinylamino)-2-deoxy-alpha-D-glucopyranoside</name>
        <dbReference type="ChEBI" id="CHEBI:58887"/>
    </ligand>
</feature>
<feature type="binding site" evidence="1">
    <location>
        <begin position="238"/>
        <end position="240"/>
    </location>
    <ligand>
        <name>acetyl-CoA</name>
        <dbReference type="ChEBI" id="CHEBI:57288"/>
        <label>2</label>
    </ligand>
</feature>
<feature type="binding site" evidence="1">
    <location>
        <begin position="245"/>
        <end position="251"/>
    </location>
    <ligand>
        <name>acetyl-CoA</name>
        <dbReference type="ChEBI" id="CHEBI:57288"/>
        <label>2</label>
    </ligand>
</feature>
<feature type="binding site" evidence="1">
    <location>
        <position position="272"/>
    </location>
    <ligand>
        <name>1D-myo-inositol 2-(L-cysteinylamino)-2-deoxy-alpha-D-glucopyranoside</name>
        <dbReference type="ChEBI" id="CHEBI:58887"/>
    </ligand>
</feature>
<feature type="binding site" evidence="1">
    <location>
        <begin position="277"/>
        <end position="282"/>
    </location>
    <ligand>
        <name>acetyl-CoA</name>
        <dbReference type="ChEBI" id="CHEBI:57288"/>
        <label>2</label>
    </ligand>
</feature>
<dbReference type="EC" id="2.3.1.189" evidence="1"/>
<dbReference type="EMBL" id="AP006618">
    <property type="protein sequence ID" value="BAD55444.1"/>
    <property type="molecule type" value="Genomic_DNA"/>
</dbReference>
<dbReference type="RefSeq" id="WP_011207131.1">
    <property type="nucleotide sequence ID" value="NC_006361.1"/>
</dbReference>
<dbReference type="SMR" id="Q5Z297"/>
<dbReference type="STRING" id="247156.NFA_5990"/>
<dbReference type="GeneID" id="61131433"/>
<dbReference type="KEGG" id="nfa:NFA_5990"/>
<dbReference type="eggNOG" id="COG0454">
    <property type="taxonomic scope" value="Bacteria"/>
</dbReference>
<dbReference type="eggNOG" id="COG0456">
    <property type="taxonomic scope" value="Bacteria"/>
</dbReference>
<dbReference type="HOGENOM" id="CLU_068014_0_0_11"/>
<dbReference type="OrthoDB" id="3208058at2"/>
<dbReference type="Proteomes" id="UP000006820">
    <property type="component" value="Chromosome"/>
</dbReference>
<dbReference type="GO" id="GO:0035447">
    <property type="term" value="F:mycothiol synthase activity"/>
    <property type="evidence" value="ECO:0007669"/>
    <property type="project" value="UniProtKB-UniRule"/>
</dbReference>
<dbReference type="GO" id="GO:0008999">
    <property type="term" value="F:protein-N-terminal-alanine acetyltransferase activity"/>
    <property type="evidence" value="ECO:0007669"/>
    <property type="project" value="TreeGrafter"/>
</dbReference>
<dbReference type="GO" id="GO:0010125">
    <property type="term" value="P:mycothiol biosynthetic process"/>
    <property type="evidence" value="ECO:0007669"/>
    <property type="project" value="UniProtKB-UniRule"/>
</dbReference>
<dbReference type="CDD" id="cd04301">
    <property type="entry name" value="NAT_SF"/>
    <property type="match status" value="1"/>
</dbReference>
<dbReference type="Gene3D" id="3.40.630.30">
    <property type="match status" value="1"/>
</dbReference>
<dbReference type="HAMAP" id="MF_01698">
    <property type="entry name" value="MshD"/>
    <property type="match status" value="1"/>
</dbReference>
<dbReference type="InterPro" id="IPR016181">
    <property type="entry name" value="Acyl_CoA_acyltransferase"/>
</dbReference>
<dbReference type="InterPro" id="IPR000182">
    <property type="entry name" value="GNAT_dom"/>
</dbReference>
<dbReference type="InterPro" id="IPR050276">
    <property type="entry name" value="MshD_Acetyltransferase"/>
</dbReference>
<dbReference type="InterPro" id="IPR017813">
    <property type="entry name" value="Mycothiol_AcTrfase"/>
</dbReference>
<dbReference type="NCBIfam" id="TIGR03448">
    <property type="entry name" value="mycothiol_MshD"/>
    <property type="match status" value="1"/>
</dbReference>
<dbReference type="PANTHER" id="PTHR43617">
    <property type="entry name" value="L-AMINO ACID N-ACETYLTRANSFERASE"/>
    <property type="match status" value="1"/>
</dbReference>
<dbReference type="PANTHER" id="PTHR43617:SF31">
    <property type="entry name" value="MYCOTHIOL ACETYLTRANSFERASE"/>
    <property type="match status" value="1"/>
</dbReference>
<dbReference type="Pfam" id="PF00583">
    <property type="entry name" value="Acetyltransf_1"/>
    <property type="match status" value="2"/>
</dbReference>
<dbReference type="PIRSF" id="PIRSF021524">
    <property type="entry name" value="MSH_acetyltransferase"/>
    <property type="match status" value="1"/>
</dbReference>
<dbReference type="SUPFAM" id="SSF55729">
    <property type="entry name" value="Acyl-CoA N-acyltransferases (Nat)"/>
    <property type="match status" value="1"/>
</dbReference>
<dbReference type="PROSITE" id="PS51186">
    <property type="entry name" value="GNAT"/>
    <property type="match status" value="2"/>
</dbReference>
<proteinExistence type="inferred from homology"/>
<accession>Q5Z297</accession>